<organismHost>
    <name type="scientific">Thermoproteus tenax</name>
    <dbReference type="NCBI Taxonomy" id="2271"/>
</organismHost>
<feature type="chain" id="PRO_0000222959" description="Uncharacterized 14.8 kDa protein">
    <location>
        <begin position="1"/>
        <end position="127"/>
    </location>
</feature>
<name>YOR2_TTV1K</name>
<dbReference type="EMBL" id="X14855">
    <property type="protein sequence ID" value="CAA32970.1"/>
    <property type="molecule type" value="Genomic_DNA"/>
</dbReference>
<dbReference type="Proteomes" id="UP000009250">
    <property type="component" value="Genome"/>
</dbReference>
<organism>
    <name type="scientific">Thermoproteus tenax virus 1 (strain KRA1)</name>
    <name type="common">TTV1</name>
    <dbReference type="NCBI Taxonomy" id="10480"/>
    <lineage>
        <taxon>Viruses</taxon>
        <taxon>Adnaviria</taxon>
        <taxon>Zilligvirae</taxon>
        <taxon>Taleaviricota</taxon>
        <taxon>Tokiviricetes</taxon>
        <taxon>Primavirales</taxon>
        <taxon>Tristromaviridae</taxon>
        <taxon>Betatristromavirus</taxon>
        <taxon>Betatristromavirus TTV1</taxon>
    </lineage>
</organism>
<protein>
    <recommendedName>
        <fullName>Uncharacterized 14.8 kDa protein</fullName>
    </recommendedName>
</protein>
<proteinExistence type="predicted"/>
<sequence>MTRYNYIRNLRIIRGEEIKVGVSSDRIPMIEIEPGHNDPERMCVMFTAMEYSHIPYQADNLDEVYDSCKILTSKITTYINVAIGFGKNLGLKLSEMMLVTRDKSKREFKVGLELGIKYAYNWTCKFQ</sequence>
<accession>P19277</accession>
<keyword id="KW-1185">Reference proteome</keyword>
<reference key="1">
    <citation type="submission" date="1989-03" db="EMBL/GenBank/DDBJ databases">
        <authorList>
            <person name="Neumann H."/>
        </authorList>
    </citation>
    <scope>NUCLEOTIDE SEQUENCE [GENOMIC DNA]</scope>
</reference>